<name>LPXH_SHEB2</name>
<proteinExistence type="inferred from homology"/>
<dbReference type="EC" id="3.6.1.54" evidence="1"/>
<dbReference type="EMBL" id="CP001252">
    <property type="protein sequence ID" value="ACK47243.1"/>
    <property type="molecule type" value="Genomic_DNA"/>
</dbReference>
<dbReference type="RefSeq" id="WP_012588030.1">
    <property type="nucleotide sequence ID" value="NC_011663.1"/>
</dbReference>
<dbReference type="SMR" id="B8E5F4"/>
<dbReference type="KEGG" id="sbp:Sbal223_2755"/>
<dbReference type="HOGENOM" id="CLU_074586_0_0_6"/>
<dbReference type="UniPathway" id="UPA00359">
    <property type="reaction ID" value="UER00480"/>
</dbReference>
<dbReference type="Proteomes" id="UP000002507">
    <property type="component" value="Chromosome"/>
</dbReference>
<dbReference type="GO" id="GO:0005737">
    <property type="term" value="C:cytoplasm"/>
    <property type="evidence" value="ECO:0007669"/>
    <property type="project" value="InterPro"/>
</dbReference>
<dbReference type="GO" id="GO:0019897">
    <property type="term" value="C:extrinsic component of plasma membrane"/>
    <property type="evidence" value="ECO:0007669"/>
    <property type="project" value="UniProtKB-UniRule"/>
</dbReference>
<dbReference type="GO" id="GO:0030145">
    <property type="term" value="F:manganese ion binding"/>
    <property type="evidence" value="ECO:0007669"/>
    <property type="project" value="UniProtKB-UniRule"/>
</dbReference>
<dbReference type="GO" id="GO:0008758">
    <property type="term" value="F:UDP-2,3-diacylglucosamine hydrolase activity"/>
    <property type="evidence" value="ECO:0007669"/>
    <property type="project" value="UniProtKB-UniRule"/>
</dbReference>
<dbReference type="GO" id="GO:0009245">
    <property type="term" value="P:lipid A biosynthetic process"/>
    <property type="evidence" value="ECO:0007669"/>
    <property type="project" value="UniProtKB-UniRule"/>
</dbReference>
<dbReference type="CDD" id="cd07398">
    <property type="entry name" value="MPP_YbbF-LpxH"/>
    <property type="match status" value="1"/>
</dbReference>
<dbReference type="Gene3D" id="3.60.21.10">
    <property type="match status" value="1"/>
</dbReference>
<dbReference type="HAMAP" id="MF_00575">
    <property type="entry name" value="LpxH"/>
    <property type="match status" value="1"/>
</dbReference>
<dbReference type="InterPro" id="IPR004843">
    <property type="entry name" value="Calcineurin-like_PHP_ApaH"/>
</dbReference>
<dbReference type="InterPro" id="IPR043461">
    <property type="entry name" value="LpxH-like"/>
</dbReference>
<dbReference type="InterPro" id="IPR029052">
    <property type="entry name" value="Metallo-depent_PP-like"/>
</dbReference>
<dbReference type="InterPro" id="IPR010138">
    <property type="entry name" value="UDP-diacylglucosamine_Hdrlase"/>
</dbReference>
<dbReference type="NCBIfam" id="TIGR01854">
    <property type="entry name" value="lipid_A_lpxH"/>
    <property type="match status" value="1"/>
</dbReference>
<dbReference type="NCBIfam" id="NF003743">
    <property type="entry name" value="PRK05340.1"/>
    <property type="match status" value="1"/>
</dbReference>
<dbReference type="PANTHER" id="PTHR34990:SF1">
    <property type="entry name" value="UDP-2,3-DIACYLGLUCOSAMINE HYDROLASE"/>
    <property type="match status" value="1"/>
</dbReference>
<dbReference type="PANTHER" id="PTHR34990">
    <property type="entry name" value="UDP-2,3-DIACYLGLUCOSAMINE HYDROLASE-RELATED"/>
    <property type="match status" value="1"/>
</dbReference>
<dbReference type="Pfam" id="PF00149">
    <property type="entry name" value="Metallophos"/>
    <property type="match status" value="1"/>
</dbReference>
<dbReference type="SUPFAM" id="SSF56300">
    <property type="entry name" value="Metallo-dependent phosphatases"/>
    <property type="match status" value="1"/>
</dbReference>
<feature type="chain" id="PRO_1000191032" description="UDP-2,3-diacylglucosamine hydrolase">
    <location>
        <begin position="1"/>
        <end position="240"/>
    </location>
</feature>
<feature type="binding site" evidence="1">
    <location>
        <position position="8"/>
    </location>
    <ligand>
        <name>Mn(2+)</name>
        <dbReference type="ChEBI" id="CHEBI:29035"/>
        <label>1</label>
    </ligand>
</feature>
<feature type="binding site" evidence="1">
    <location>
        <position position="10"/>
    </location>
    <ligand>
        <name>Mn(2+)</name>
        <dbReference type="ChEBI" id="CHEBI:29035"/>
        <label>1</label>
    </ligand>
</feature>
<feature type="binding site" evidence="1">
    <location>
        <position position="41"/>
    </location>
    <ligand>
        <name>Mn(2+)</name>
        <dbReference type="ChEBI" id="CHEBI:29035"/>
        <label>1</label>
    </ligand>
</feature>
<feature type="binding site" evidence="1">
    <location>
        <position position="41"/>
    </location>
    <ligand>
        <name>Mn(2+)</name>
        <dbReference type="ChEBI" id="CHEBI:29035"/>
        <label>2</label>
    </ligand>
</feature>
<feature type="binding site" evidence="1">
    <location>
        <begin position="78"/>
        <end position="79"/>
    </location>
    <ligand>
        <name>substrate</name>
    </ligand>
</feature>
<feature type="binding site" evidence="1">
    <location>
        <position position="78"/>
    </location>
    <ligand>
        <name>Mn(2+)</name>
        <dbReference type="ChEBI" id="CHEBI:29035"/>
        <label>2</label>
    </ligand>
</feature>
<feature type="binding site" evidence="1">
    <location>
        <position position="113"/>
    </location>
    <ligand>
        <name>Mn(2+)</name>
        <dbReference type="ChEBI" id="CHEBI:29035"/>
        <label>2</label>
    </ligand>
</feature>
<feature type="binding site" evidence="1">
    <location>
        <position position="121"/>
    </location>
    <ligand>
        <name>substrate</name>
    </ligand>
</feature>
<feature type="binding site" evidence="1">
    <location>
        <position position="159"/>
    </location>
    <ligand>
        <name>substrate</name>
    </ligand>
</feature>
<feature type="binding site" evidence="1">
    <location>
        <position position="163"/>
    </location>
    <ligand>
        <name>substrate</name>
    </ligand>
</feature>
<feature type="binding site" evidence="1">
    <location>
        <position position="166"/>
    </location>
    <ligand>
        <name>substrate</name>
    </ligand>
</feature>
<feature type="binding site" evidence="1">
    <location>
        <position position="194"/>
    </location>
    <ligand>
        <name>Mn(2+)</name>
        <dbReference type="ChEBI" id="CHEBI:29035"/>
        <label>2</label>
    </ligand>
</feature>
<feature type="binding site" evidence="1">
    <location>
        <position position="194"/>
    </location>
    <ligand>
        <name>substrate</name>
    </ligand>
</feature>
<feature type="binding site" evidence="1">
    <location>
        <position position="196"/>
    </location>
    <ligand>
        <name>Mn(2+)</name>
        <dbReference type="ChEBI" id="CHEBI:29035"/>
        <label>1</label>
    </ligand>
</feature>
<gene>
    <name evidence="1" type="primary">lpxH</name>
    <name type="ordered locus">Sbal223_2755</name>
</gene>
<accession>B8E5F4</accession>
<keyword id="KW-0997">Cell inner membrane</keyword>
<keyword id="KW-1003">Cell membrane</keyword>
<keyword id="KW-0378">Hydrolase</keyword>
<keyword id="KW-0441">Lipid A biosynthesis</keyword>
<keyword id="KW-0444">Lipid biosynthesis</keyword>
<keyword id="KW-0443">Lipid metabolism</keyword>
<keyword id="KW-0464">Manganese</keyword>
<keyword id="KW-0472">Membrane</keyword>
<keyword id="KW-0479">Metal-binding</keyword>
<evidence type="ECO:0000255" key="1">
    <source>
        <dbReference type="HAMAP-Rule" id="MF_00575"/>
    </source>
</evidence>
<protein>
    <recommendedName>
        <fullName evidence="1">UDP-2,3-diacylglucosamine hydrolase</fullName>
        <ecNumber evidence="1">3.6.1.54</ecNumber>
    </recommendedName>
    <alternativeName>
        <fullName evidence="1">UDP-2,3-diacylglucosamine diphosphatase</fullName>
    </alternativeName>
</protein>
<organism>
    <name type="scientific">Shewanella baltica (strain OS223)</name>
    <dbReference type="NCBI Taxonomy" id="407976"/>
    <lineage>
        <taxon>Bacteria</taxon>
        <taxon>Pseudomonadati</taxon>
        <taxon>Pseudomonadota</taxon>
        <taxon>Gammaproteobacteria</taxon>
        <taxon>Alteromonadales</taxon>
        <taxon>Shewanellaceae</taxon>
        <taxon>Shewanella</taxon>
    </lineage>
</organism>
<comment type="function">
    <text evidence="1">Hydrolyzes the pyrophosphate bond of UDP-2,3-diacylglucosamine to yield 2,3-diacylglucosamine 1-phosphate (lipid X) and UMP by catalyzing the attack of water at the alpha-P atom. Involved in the biosynthesis of lipid A, a phosphorylated glycolipid that anchors the lipopolysaccharide to the outer membrane of the cell.</text>
</comment>
<comment type="catalytic activity">
    <reaction evidence="1">
        <text>UDP-2-N,3-O-bis[(3R)-3-hydroxytetradecanoyl]-alpha-D-glucosamine + H2O = 2-N,3-O-bis[(3R)-3-hydroxytetradecanoyl]-alpha-D-glucosaminyl 1-phosphate + UMP + 2 H(+)</text>
        <dbReference type="Rhea" id="RHEA:25213"/>
        <dbReference type="ChEBI" id="CHEBI:15377"/>
        <dbReference type="ChEBI" id="CHEBI:15378"/>
        <dbReference type="ChEBI" id="CHEBI:57865"/>
        <dbReference type="ChEBI" id="CHEBI:57957"/>
        <dbReference type="ChEBI" id="CHEBI:78847"/>
        <dbReference type="EC" id="3.6.1.54"/>
    </reaction>
</comment>
<comment type="cofactor">
    <cofactor evidence="1">
        <name>Mn(2+)</name>
        <dbReference type="ChEBI" id="CHEBI:29035"/>
    </cofactor>
    <text evidence="1">Binds 2 Mn(2+) ions per subunit in a binuclear metal center.</text>
</comment>
<comment type="pathway">
    <text evidence="1">Glycolipid biosynthesis; lipid IV(A) biosynthesis; lipid IV(A) from (3R)-3-hydroxytetradecanoyl-[acyl-carrier-protein] and UDP-N-acetyl-alpha-D-glucosamine: step 4/6.</text>
</comment>
<comment type="subcellular location">
    <subcellularLocation>
        <location evidence="1">Cell inner membrane</location>
        <topology evidence="1">Peripheral membrane protein</topology>
        <orientation evidence="1">Cytoplasmic side</orientation>
    </subcellularLocation>
</comment>
<comment type="similarity">
    <text evidence="1">Belongs to the LpxH family.</text>
</comment>
<sequence>MRTLFIGDLHLSADRLDITQAFTRFLDTELDDADALYILGDLFEVWVGDDIALPFALELAEKLKQVSQKLPVYFIHGNRDFMLGKQFARAAGMQILPEVKCLNLYGIETVILHGDSLCTLDKAYQRFRKLRSLSLARWLYGCLSKKTRQGIADKIRSNSKSSNQQKSYTIMDVEPNAVDALFAKTHTKHMIHGHTHRPAIHQLANGCQRIVVGDWYEQGSVLSVSAEGINLQSLPFEQAT</sequence>
<reference key="1">
    <citation type="submission" date="2008-12" db="EMBL/GenBank/DDBJ databases">
        <title>Complete sequence of chromosome of Shewanella baltica OS223.</title>
        <authorList>
            <consortium name="US DOE Joint Genome Institute"/>
            <person name="Lucas S."/>
            <person name="Copeland A."/>
            <person name="Lapidus A."/>
            <person name="Glavina del Rio T."/>
            <person name="Dalin E."/>
            <person name="Tice H."/>
            <person name="Bruce D."/>
            <person name="Goodwin L."/>
            <person name="Pitluck S."/>
            <person name="Chertkov O."/>
            <person name="Meincke L."/>
            <person name="Brettin T."/>
            <person name="Detter J.C."/>
            <person name="Han C."/>
            <person name="Kuske C.R."/>
            <person name="Larimer F."/>
            <person name="Land M."/>
            <person name="Hauser L."/>
            <person name="Kyrpides N."/>
            <person name="Ovchinnikova G."/>
            <person name="Brettar I."/>
            <person name="Rodrigues J."/>
            <person name="Konstantinidis K."/>
            <person name="Tiedje J."/>
        </authorList>
    </citation>
    <scope>NUCLEOTIDE SEQUENCE [LARGE SCALE GENOMIC DNA]</scope>
    <source>
        <strain>OS223</strain>
    </source>
</reference>